<sequence length="75" mass="7988">MSDVVSVRVKPGSKKGPLVETGPDGELTVYVRERAVDGKANAAVIRVLAEHFGVPRSLVELTGGASSRIKRFRIG</sequence>
<reference key="1">
    <citation type="submission" date="2006-12" db="EMBL/GenBank/DDBJ databases">
        <title>Complete sequence of Mycobacterium vanbaalenii PYR-1.</title>
        <authorList>
            <consortium name="US DOE Joint Genome Institute"/>
            <person name="Copeland A."/>
            <person name="Lucas S."/>
            <person name="Lapidus A."/>
            <person name="Barry K."/>
            <person name="Detter J.C."/>
            <person name="Glavina del Rio T."/>
            <person name="Hammon N."/>
            <person name="Israni S."/>
            <person name="Dalin E."/>
            <person name="Tice H."/>
            <person name="Pitluck S."/>
            <person name="Singan V."/>
            <person name="Schmutz J."/>
            <person name="Larimer F."/>
            <person name="Land M."/>
            <person name="Hauser L."/>
            <person name="Kyrpides N."/>
            <person name="Anderson I.J."/>
            <person name="Miller C."/>
            <person name="Richardson P."/>
        </authorList>
    </citation>
    <scope>NUCLEOTIDE SEQUENCE [LARGE SCALE GENOMIC DNA]</scope>
    <source>
        <strain>DSM 7251 / JCM 13017 / BCRC 16820 / KCTC 9966 / NRRL B-24157 / PYR-1</strain>
    </source>
</reference>
<feature type="chain" id="PRO_1000056775" description="UPF0235 protein Mvan_2846">
    <location>
        <begin position="1"/>
        <end position="75"/>
    </location>
</feature>
<accession>A1T903</accession>
<proteinExistence type="inferred from homology"/>
<gene>
    <name type="ordered locus">Mvan_2846</name>
</gene>
<dbReference type="EMBL" id="CP000511">
    <property type="protein sequence ID" value="ABM13653.1"/>
    <property type="molecule type" value="Genomic_DNA"/>
</dbReference>
<dbReference type="RefSeq" id="WP_011780061.1">
    <property type="nucleotide sequence ID" value="NC_008726.1"/>
</dbReference>
<dbReference type="SMR" id="A1T903"/>
<dbReference type="STRING" id="350058.Mvan_2846"/>
<dbReference type="KEGG" id="mva:Mvan_2846"/>
<dbReference type="eggNOG" id="COG1872">
    <property type="taxonomic scope" value="Bacteria"/>
</dbReference>
<dbReference type="HOGENOM" id="CLU_130694_5_3_11"/>
<dbReference type="Proteomes" id="UP000009159">
    <property type="component" value="Chromosome"/>
</dbReference>
<dbReference type="Gene3D" id="3.30.1200.10">
    <property type="entry name" value="YggU-like"/>
    <property type="match status" value="1"/>
</dbReference>
<dbReference type="HAMAP" id="MF_00634">
    <property type="entry name" value="UPF0235"/>
    <property type="match status" value="1"/>
</dbReference>
<dbReference type="InterPro" id="IPR003746">
    <property type="entry name" value="DUF167"/>
</dbReference>
<dbReference type="InterPro" id="IPR036591">
    <property type="entry name" value="YggU-like_sf"/>
</dbReference>
<dbReference type="NCBIfam" id="TIGR00251">
    <property type="entry name" value="DUF167 family protein"/>
    <property type="match status" value="1"/>
</dbReference>
<dbReference type="Pfam" id="PF02594">
    <property type="entry name" value="DUF167"/>
    <property type="match status" value="1"/>
</dbReference>
<dbReference type="SMART" id="SM01152">
    <property type="entry name" value="DUF167"/>
    <property type="match status" value="1"/>
</dbReference>
<dbReference type="SUPFAM" id="SSF69786">
    <property type="entry name" value="YggU-like"/>
    <property type="match status" value="1"/>
</dbReference>
<protein>
    <recommendedName>
        <fullName evidence="1">UPF0235 protein Mvan_2846</fullName>
    </recommendedName>
</protein>
<name>Y2846_MYCVP</name>
<comment type="similarity">
    <text evidence="1">Belongs to the UPF0235 family.</text>
</comment>
<organism>
    <name type="scientific">Mycolicibacterium vanbaalenii (strain DSM 7251 / JCM 13017 / BCRC 16820 / KCTC 9966 / NRRL B-24157 / PYR-1)</name>
    <name type="common">Mycobacterium vanbaalenii</name>
    <dbReference type="NCBI Taxonomy" id="350058"/>
    <lineage>
        <taxon>Bacteria</taxon>
        <taxon>Bacillati</taxon>
        <taxon>Actinomycetota</taxon>
        <taxon>Actinomycetes</taxon>
        <taxon>Mycobacteriales</taxon>
        <taxon>Mycobacteriaceae</taxon>
        <taxon>Mycolicibacterium</taxon>
    </lineage>
</organism>
<evidence type="ECO:0000255" key="1">
    <source>
        <dbReference type="HAMAP-Rule" id="MF_00634"/>
    </source>
</evidence>